<name>FER1_AQUAE</name>
<comment type="function">
    <text>Ferredoxins are iron-sulfur proteins that transfer electrons in a wide variety of metabolic reactions.</text>
</comment>
<comment type="cofactor">
    <cofactor evidence="1">
        <name>[2Fe-2S] cluster</name>
        <dbReference type="ChEBI" id="CHEBI:190135"/>
    </cofactor>
    <text evidence="1">Binds 1 [2Fe-2S] cluster.</text>
</comment>
<comment type="similarity">
    <text evidence="3">Belongs to the 2Fe2S plant-type ferredoxin family.</text>
</comment>
<proteinExistence type="evidence at protein level"/>
<reference key="1">
    <citation type="journal article" date="1998" name="Nature">
        <title>The complete genome of the hyperthermophilic bacterium Aquifex aeolicus.</title>
        <authorList>
            <person name="Deckert G."/>
            <person name="Warren P.V."/>
            <person name="Gaasterland T."/>
            <person name="Young W.G."/>
            <person name="Lenox A.L."/>
            <person name="Graham D.E."/>
            <person name="Overbeek R."/>
            <person name="Snead M.A."/>
            <person name="Keller M."/>
            <person name="Aujay M."/>
            <person name="Huber R."/>
            <person name="Feldman R.A."/>
            <person name="Short J.M."/>
            <person name="Olsen G.J."/>
            <person name="Swanson R.V."/>
        </authorList>
    </citation>
    <scope>NUCLEOTIDE SEQUENCE [LARGE SCALE GENOMIC DNA]</scope>
    <source>
        <strain>VF5</strain>
    </source>
</reference>
<reference key="2">
    <citation type="journal article" date="2002" name="Biochemistry">
        <title>A hyperthermophilic plant-type [2Fe-2S] ferredoxin from Aquifex aeolicus is stabilized by a disulfide bond.</title>
        <authorList>
            <person name="Meyer J."/>
            <person name="Clay M.D."/>
            <person name="Johnson M.K."/>
            <person name="Stubna A."/>
            <person name="Munck E."/>
            <person name="Higgins C."/>
            <person name="Wittung-Stafshede P."/>
        </authorList>
    </citation>
    <scope>DISULFIDE BOND</scope>
</reference>
<sequence>MKVIINGKEFDIPKGVRFGELSHEIEKAGIEFGCTDGQCGVCVARVIKGMECLNEPSEEEEETLWRVGAVDEDQRLTCQLVIEKEDCDEIVIESED</sequence>
<gene>
    <name type="primary">fdx1</name>
    <name type="ordered locus">aq_919.1</name>
    <name type="ORF">aq_919A</name>
</gene>
<protein>
    <recommendedName>
        <fullName>Ferredoxin-1</fullName>
        <shortName>Fd1</shortName>
    </recommendedName>
</protein>
<keyword id="KW-0001">2Fe-2S</keyword>
<keyword id="KW-1015">Disulfide bond</keyword>
<keyword id="KW-0249">Electron transport</keyword>
<keyword id="KW-0408">Iron</keyword>
<keyword id="KW-0411">Iron-sulfur</keyword>
<keyword id="KW-0479">Metal-binding</keyword>
<keyword id="KW-1185">Reference proteome</keyword>
<keyword id="KW-0813">Transport</keyword>
<accession>O67065</accession>
<evidence type="ECO:0000250" key="1"/>
<evidence type="ECO:0000269" key="2">
    <source>
    </source>
</evidence>
<evidence type="ECO:0000305" key="3"/>
<feature type="chain" id="PRO_0000189388" description="Ferredoxin-1">
    <location>
        <begin position="1"/>
        <end position="96"/>
    </location>
</feature>
<feature type="domain" description="2Fe-2S ferredoxin-type">
    <location>
        <begin position="1"/>
        <end position="95"/>
    </location>
</feature>
<feature type="binding site" evidence="1">
    <location>
        <position position="34"/>
    </location>
    <ligand>
        <name>[2Fe-2S] cluster</name>
        <dbReference type="ChEBI" id="CHEBI:190135"/>
    </ligand>
</feature>
<feature type="binding site" evidence="1">
    <location>
        <position position="39"/>
    </location>
    <ligand>
        <name>[2Fe-2S] cluster</name>
        <dbReference type="ChEBI" id="CHEBI:190135"/>
    </ligand>
</feature>
<feature type="binding site" evidence="1">
    <location>
        <position position="42"/>
    </location>
    <ligand>
        <name>[2Fe-2S] cluster</name>
        <dbReference type="ChEBI" id="CHEBI:190135"/>
    </ligand>
</feature>
<feature type="binding site" evidence="1">
    <location>
        <position position="78"/>
    </location>
    <ligand>
        <name>[2Fe-2S] cluster</name>
        <dbReference type="ChEBI" id="CHEBI:190135"/>
    </ligand>
</feature>
<feature type="disulfide bond" evidence="2">
    <location>
        <begin position="52"/>
        <end position="87"/>
    </location>
</feature>
<organism>
    <name type="scientific">Aquifex aeolicus (strain VF5)</name>
    <dbReference type="NCBI Taxonomy" id="224324"/>
    <lineage>
        <taxon>Bacteria</taxon>
        <taxon>Pseudomonadati</taxon>
        <taxon>Aquificota</taxon>
        <taxon>Aquificia</taxon>
        <taxon>Aquificales</taxon>
        <taxon>Aquificaceae</taxon>
        <taxon>Aquifex</taxon>
    </lineage>
</organism>
<dbReference type="EMBL" id="AE000657">
    <property type="protein sequence ID" value="AAC07010.1"/>
    <property type="molecule type" value="Genomic_DNA"/>
</dbReference>
<dbReference type="PIR" id="F70379">
    <property type="entry name" value="F70379"/>
</dbReference>
<dbReference type="RefSeq" id="NP_213627.1">
    <property type="nucleotide sequence ID" value="NC_000918.1"/>
</dbReference>
<dbReference type="RefSeq" id="WP_010880565.1">
    <property type="nucleotide sequence ID" value="NC_000918.1"/>
</dbReference>
<dbReference type="SMR" id="O67065"/>
<dbReference type="STRING" id="224324.aq_919a"/>
<dbReference type="EnsemblBacteria" id="AAC07010">
    <property type="protein sequence ID" value="AAC07010"/>
    <property type="gene ID" value="aq_919a"/>
</dbReference>
<dbReference type="KEGG" id="aae:aq_919a"/>
<dbReference type="PATRIC" id="fig|224324.8.peg.720"/>
<dbReference type="eggNOG" id="COG0633">
    <property type="taxonomic scope" value="Bacteria"/>
</dbReference>
<dbReference type="HOGENOM" id="CLU_082632_8_1_0"/>
<dbReference type="InParanoid" id="O67065"/>
<dbReference type="OrthoDB" id="9807864at2"/>
<dbReference type="Proteomes" id="UP000000798">
    <property type="component" value="Chromosome"/>
</dbReference>
<dbReference type="GO" id="GO:0051537">
    <property type="term" value="F:2 iron, 2 sulfur cluster binding"/>
    <property type="evidence" value="ECO:0007669"/>
    <property type="project" value="UniProtKB-KW"/>
</dbReference>
<dbReference type="GO" id="GO:0046872">
    <property type="term" value="F:metal ion binding"/>
    <property type="evidence" value="ECO:0007669"/>
    <property type="project" value="UniProtKB-KW"/>
</dbReference>
<dbReference type="CDD" id="cd00207">
    <property type="entry name" value="fer2"/>
    <property type="match status" value="1"/>
</dbReference>
<dbReference type="Gene3D" id="3.10.20.30">
    <property type="match status" value="1"/>
</dbReference>
<dbReference type="InterPro" id="IPR036010">
    <property type="entry name" value="2Fe-2S_ferredoxin-like_sf"/>
</dbReference>
<dbReference type="InterPro" id="IPR001041">
    <property type="entry name" value="2Fe-2S_ferredoxin-type"/>
</dbReference>
<dbReference type="InterPro" id="IPR006058">
    <property type="entry name" value="2Fe2S_fd_BS"/>
</dbReference>
<dbReference type="InterPro" id="IPR012675">
    <property type="entry name" value="Beta-grasp_dom_sf"/>
</dbReference>
<dbReference type="Pfam" id="PF00111">
    <property type="entry name" value="Fer2"/>
    <property type="match status" value="1"/>
</dbReference>
<dbReference type="SUPFAM" id="SSF54292">
    <property type="entry name" value="2Fe-2S ferredoxin-like"/>
    <property type="match status" value="1"/>
</dbReference>
<dbReference type="PROSITE" id="PS00197">
    <property type="entry name" value="2FE2S_FER_1"/>
    <property type="match status" value="1"/>
</dbReference>